<accession>O67546</accession>
<name>SUCC_AQUAE</name>
<feature type="chain" id="PRO_0000102817" description="Succinate--CoA ligase [ADP-forming] subunit beta">
    <location>
        <begin position="1"/>
        <end position="385"/>
    </location>
</feature>
<feature type="domain" description="ATP-grasp" evidence="1">
    <location>
        <begin position="9"/>
        <end position="240"/>
    </location>
</feature>
<feature type="binding site" evidence="1">
    <location>
        <position position="46"/>
    </location>
    <ligand>
        <name>ATP</name>
        <dbReference type="ChEBI" id="CHEBI:30616"/>
    </ligand>
</feature>
<feature type="binding site" evidence="1">
    <location>
        <begin position="53"/>
        <end position="55"/>
    </location>
    <ligand>
        <name>ATP</name>
        <dbReference type="ChEBI" id="CHEBI:30616"/>
    </ligand>
</feature>
<feature type="binding site" evidence="1">
    <location>
        <position position="98"/>
    </location>
    <ligand>
        <name>ATP</name>
        <dbReference type="ChEBI" id="CHEBI:30616"/>
    </ligand>
</feature>
<feature type="binding site" evidence="1">
    <location>
        <position position="101"/>
    </location>
    <ligand>
        <name>ATP</name>
        <dbReference type="ChEBI" id="CHEBI:30616"/>
    </ligand>
</feature>
<feature type="binding site" evidence="1">
    <location>
        <position position="106"/>
    </location>
    <ligand>
        <name>ATP</name>
        <dbReference type="ChEBI" id="CHEBI:30616"/>
    </ligand>
</feature>
<feature type="binding site" evidence="1">
    <location>
        <position position="195"/>
    </location>
    <ligand>
        <name>Mg(2+)</name>
        <dbReference type="ChEBI" id="CHEBI:18420"/>
    </ligand>
</feature>
<feature type="binding site" evidence="1">
    <location>
        <position position="209"/>
    </location>
    <ligand>
        <name>Mg(2+)</name>
        <dbReference type="ChEBI" id="CHEBI:18420"/>
    </ligand>
</feature>
<feature type="binding site" evidence="1">
    <location>
        <position position="260"/>
    </location>
    <ligand>
        <name>substrate</name>
        <note>ligand shared with subunit alpha</note>
    </ligand>
</feature>
<feature type="binding site" evidence="1">
    <location>
        <begin position="317"/>
        <end position="319"/>
    </location>
    <ligand>
        <name>substrate</name>
        <note>ligand shared with subunit alpha</note>
    </ligand>
</feature>
<protein>
    <recommendedName>
        <fullName evidence="1">Succinate--CoA ligase [ADP-forming] subunit beta</fullName>
        <ecNumber evidence="1">6.2.1.5</ecNumber>
    </recommendedName>
    <alternativeName>
        <fullName evidence="1">Succinyl-CoA synthetase subunit beta</fullName>
        <shortName evidence="1">SCS-beta</shortName>
    </alternativeName>
</protein>
<comment type="function">
    <text evidence="1">Succinyl-CoA synthetase functions in the citric acid cycle (TCA), coupling the hydrolysis of succinyl-CoA to the synthesis of either ATP or GTP and thus represents the only step of substrate-level phosphorylation in the TCA. The beta subunit provides nucleotide specificity of the enzyme and binds the substrate succinate, while the binding sites for coenzyme A and phosphate are found in the alpha subunit.</text>
</comment>
<comment type="catalytic activity">
    <reaction evidence="1">
        <text>succinate + ATP + CoA = succinyl-CoA + ADP + phosphate</text>
        <dbReference type="Rhea" id="RHEA:17661"/>
        <dbReference type="ChEBI" id="CHEBI:30031"/>
        <dbReference type="ChEBI" id="CHEBI:30616"/>
        <dbReference type="ChEBI" id="CHEBI:43474"/>
        <dbReference type="ChEBI" id="CHEBI:57287"/>
        <dbReference type="ChEBI" id="CHEBI:57292"/>
        <dbReference type="ChEBI" id="CHEBI:456216"/>
        <dbReference type="EC" id="6.2.1.5"/>
    </reaction>
    <physiologicalReaction direction="right-to-left" evidence="1">
        <dbReference type="Rhea" id="RHEA:17663"/>
    </physiologicalReaction>
</comment>
<comment type="catalytic activity">
    <reaction evidence="1">
        <text>GTP + succinate + CoA = succinyl-CoA + GDP + phosphate</text>
        <dbReference type="Rhea" id="RHEA:22120"/>
        <dbReference type="ChEBI" id="CHEBI:30031"/>
        <dbReference type="ChEBI" id="CHEBI:37565"/>
        <dbReference type="ChEBI" id="CHEBI:43474"/>
        <dbReference type="ChEBI" id="CHEBI:57287"/>
        <dbReference type="ChEBI" id="CHEBI:57292"/>
        <dbReference type="ChEBI" id="CHEBI:58189"/>
    </reaction>
    <physiologicalReaction direction="right-to-left" evidence="1">
        <dbReference type="Rhea" id="RHEA:22122"/>
    </physiologicalReaction>
</comment>
<comment type="cofactor">
    <cofactor evidence="1">
        <name>Mg(2+)</name>
        <dbReference type="ChEBI" id="CHEBI:18420"/>
    </cofactor>
    <text evidence="1">Binds 1 Mg(2+) ion per subunit.</text>
</comment>
<comment type="pathway">
    <text evidence="1">Carbohydrate metabolism; tricarboxylic acid cycle; succinate from succinyl-CoA (ligase route): step 1/1.</text>
</comment>
<comment type="subunit">
    <text evidence="1">Heterotetramer of two alpha and two beta subunits.</text>
</comment>
<comment type="similarity">
    <text evidence="1">Belongs to the succinate/malate CoA ligase beta subunit family.</text>
</comment>
<keyword id="KW-0067">ATP-binding</keyword>
<keyword id="KW-0436">Ligase</keyword>
<keyword id="KW-0460">Magnesium</keyword>
<keyword id="KW-0479">Metal-binding</keyword>
<keyword id="KW-0547">Nucleotide-binding</keyword>
<keyword id="KW-1185">Reference proteome</keyword>
<keyword id="KW-0816">Tricarboxylic acid cycle</keyword>
<evidence type="ECO:0000255" key="1">
    <source>
        <dbReference type="HAMAP-Rule" id="MF_00558"/>
    </source>
</evidence>
<reference key="1">
    <citation type="journal article" date="1998" name="Nature">
        <title>The complete genome of the hyperthermophilic bacterium Aquifex aeolicus.</title>
        <authorList>
            <person name="Deckert G."/>
            <person name="Warren P.V."/>
            <person name="Gaasterland T."/>
            <person name="Young W.G."/>
            <person name="Lenox A.L."/>
            <person name="Graham D.E."/>
            <person name="Overbeek R."/>
            <person name="Snead M.A."/>
            <person name="Keller M."/>
            <person name="Aujay M."/>
            <person name="Huber R."/>
            <person name="Feldman R.A."/>
            <person name="Short J.M."/>
            <person name="Olsen G.J."/>
            <person name="Swanson R.V."/>
        </authorList>
    </citation>
    <scope>NUCLEOTIDE SEQUENCE [LARGE SCALE GENOMIC DNA]</scope>
    <source>
        <strain>VF5</strain>
    </source>
</reference>
<proteinExistence type="inferred from homology"/>
<dbReference type="EC" id="6.2.1.5" evidence="1"/>
<dbReference type="EMBL" id="AE000657">
    <property type="protein sequence ID" value="AAC07508.1"/>
    <property type="molecule type" value="Genomic_DNA"/>
</dbReference>
<dbReference type="PIR" id="H70439">
    <property type="entry name" value="H70439"/>
</dbReference>
<dbReference type="RefSeq" id="NP_214111.1">
    <property type="nucleotide sequence ID" value="NC_000918.1"/>
</dbReference>
<dbReference type="RefSeq" id="WP_010881049.1">
    <property type="nucleotide sequence ID" value="NC_000918.1"/>
</dbReference>
<dbReference type="SMR" id="O67546"/>
<dbReference type="FunCoup" id="O67546">
    <property type="interactions" value="439"/>
</dbReference>
<dbReference type="STRING" id="224324.aq_1620"/>
<dbReference type="EnsemblBacteria" id="AAC07508">
    <property type="protein sequence ID" value="AAC07508"/>
    <property type="gene ID" value="aq_1620"/>
</dbReference>
<dbReference type="KEGG" id="aae:aq_1620"/>
<dbReference type="PATRIC" id="fig|224324.8.peg.1249"/>
<dbReference type="eggNOG" id="COG0045">
    <property type="taxonomic scope" value="Bacteria"/>
</dbReference>
<dbReference type="HOGENOM" id="CLU_037430_0_2_0"/>
<dbReference type="InParanoid" id="O67546"/>
<dbReference type="OrthoDB" id="9802602at2"/>
<dbReference type="UniPathway" id="UPA00223">
    <property type="reaction ID" value="UER00999"/>
</dbReference>
<dbReference type="Proteomes" id="UP000000798">
    <property type="component" value="Chromosome"/>
</dbReference>
<dbReference type="GO" id="GO:0005829">
    <property type="term" value="C:cytosol"/>
    <property type="evidence" value="ECO:0000318"/>
    <property type="project" value="GO_Central"/>
</dbReference>
<dbReference type="GO" id="GO:0042709">
    <property type="term" value="C:succinate-CoA ligase complex"/>
    <property type="evidence" value="ECO:0000318"/>
    <property type="project" value="GO_Central"/>
</dbReference>
<dbReference type="GO" id="GO:0005524">
    <property type="term" value="F:ATP binding"/>
    <property type="evidence" value="ECO:0007669"/>
    <property type="project" value="UniProtKB-UniRule"/>
</dbReference>
<dbReference type="GO" id="GO:0000287">
    <property type="term" value="F:magnesium ion binding"/>
    <property type="evidence" value="ECO:0007669"/>
    <property type="project" value="UniProtKB-UniRule"/>
</dbReference>
<dbReference type="GO" id="GO:0004775">
    <property type="term" value="F:succinate-CoA ligase (ADP-forming) activity"/>
    <property type="evidence" value="ECO:0000318"/>
    <property type="project" value="GO_Central"/>
</dbReference>
<dbReference type="GO" id="GO:0004776">
    <property type="term" value="F:succinate-CoA ligase (GDP-forming) activity"/>
    <property type="evidence" value="ECO:0007669"/>
    <property type="project" value="RHEA"/>
</dbReference>
<dbReference type="GO" id="GO:0006104">
    <property type="term" value="P:succinyl-CoA metabolic process"/>
    <property type="evidence" value="ECO:0000318"/>
    <property type="project" value="GO_Central"/>
</dbReference>
<dbReference type="GO" id="GO:0006099">
    <property type="term" value="P:tricarboxylic acid cycle"/>
    <property type="evidence" value="ECO:0000318"/>
    <property type="project" value="GO_Central"/>
</dbReference>
<dbReference type="FunFam" id="3.30.1490.20:FF:000002">
    <property type="entry name" value="Succinate--CoA ligase [ADP-forming] subunit beta"/>
    <property type="match status" value="1"/>
</dbReference>
<dbReference type="FunFam" id="3.30.470.20:FF:000002">
    <property type="entry name" value="Succinate--CoA ligase [ADP-forming] subunit beta"/>
    <property type="match status" value="1"/>
</dbReference>
<dbReference type="FunFam" id="3.40.50.261:FF:000001">
    <property type="entry name" value="Succinate--CoA ligase [ADP-forming] subunit beta"/>
    <property type="match status" value="1"/>
</dbReference>
<dbReference type="Gene3D" id="3.30.1490.20">
    <property type="entry name" value="ATP-grasp fold, A domain"/>
    <property type="match status" value="1"/>
</dbReference>
<dbReference type="Gene3D" id="3.30.470.20">
    <property type="entry name" value="ATP-grasp fold, B domain"/>
    <property type="match status" value="1"/>
</dbReference>
<dbReference type="Gene3D" id="3.40.50.261">
    <property type="entry name" value="Succinyl-CoA synthetase domains"/>
    <property type="match status" value="1"/>
</dbReference>
<dbReference type="HAMAP" id="MF_00558">
    <property type="entry name" value="Succ_CoA_beta"/>
    <property type="match status" value="1"/>
</dbReference>
<dbReference type="InterPro" id="IPR011761">
    <property type="entry name" value="ATP-grasp"/>
</dbReference>
<dbReference type="InterPro" id="IPR013650">
    <property type="entry name" value="ATP-grasp_succ-CoA_synth-type"/>
</dbReference>
<dbReference type="InterPro" id="IPR013815">
    <property type="entry name" value="ATP_grasp_subdomain_1"/>
</dbReference>
<dbReference type="InterPro" id="IPR017866">
    <property type="entry name" value="Succ-CoA_synthase_bsu_CS"/>
</dbReference>
<dbReference type="InterPro" id="IPR005811">
    <property type="entry name" value="SUCC_ACL_C"/>
</dbReference>
<dbReference type="InterPro" id="IPR005809">
    <property type="entry name" value="Succ_CoA_ligase-like_bsu"/>
</dbReference>
<dbReference type="InterPro" id="IPR016102">
    <property type="entry name" value="Succinyl-CoA_synth-like"/>
</dbReference>
<dbReference type="NCBIfam" id="NF001913">
    <property type="entry name" value="PRK00696.1"/>
    <property type="match status" value="1"/>
</dbReference>
<dbReference type="NCBIfam" id="TIGR01016">
    <property type="entry name" value="sucCoAbeta"/>
    <property type="match status" value="1"/>
</dbReference>
<dbReference type="PANTHER" id="PTHR11815:SF10">
    <property type="entry name" value="SUCCINATE--COA LIGASE [GDP-FORMING] SUBUNIT BETA, MITOCHONDRIAL"/>
    <property type="match status" value="1"/>
</dbReference>
<dbReference type="PANTHER" id="PTHR11815">
    <property type="entry name" value="SUCCINYL-COA SYNTHETASE BETA CHAIN"/>
    <property type="match status" value="1"/>
</dbReference>
<dbReference type="Pfam" id="PF08442">
    <property type="entry name" value="ATP-grasp_2"/>
    <property type="match status" value="1"/>
</dbReference>
<dbReference type="Pfam" id="PF00549">
    <property type="entry name" value="Ligase_CoA"/>
    <property type="match status" value="1"/>
</dbReference>
<dbReference type="PIRSF" id="PIRSF001554">
    <property type="entry name" value="SucCS_beta"/>
    <property type="match status" value="1"/>
</dbReference>
<dbReference type="SUPFAM" id="SSF56059">
    <property type="entry name" value="Glutathione synthetase ATP-binding domain-like"/>
    <property type="match status" value="1"/>
</dbReference>
<dbReference type="SUPFAM" id="SSF52210">
    <property type="entry name" value="Succinyl-CoA synthetase domains"/>
    <property type="match status" value="1"/>
</dbReference>
<dbReference type="PROSITE" id="PS50975">
    <property type="entry name" value="ATP_GRASP"/>
    <property type="match status" value="1"/>
</dbReference>
<dbReference type="PROSITE" id="PS01217">
    <property type="entry name" value="SUCCINYL_COA_LIG_3"/>
    <property type="match status" value="1"/>
</dbReference>
<sequence>MKLHEHQAKEIFAKYGIPVPEGKVAFSLKEAKEVAEELGEFPLVVKAQIHCGGRGKAGGVKIVKDMDELEKAVESLLGKVLKTFQCPDGKPVNRVLIEKATNIDKEYYLAITLDRSKSKPVIMASAAGGMEIEEIVKENPEAIIIETIDPELGLMPYQARELAFKLNLPVKEFASIALKLYQIYSDLDASLVEINPLVLTKEGNLIALDAKLDIDDNALFRHKDLEEMEDETQLPQLEVEAKKYGLNYIKLNGNIGCMVNGAGLAMATMDIIKLAGGEPANFLDVGGGANVEQIANAFRILMADPDVKAVFINIFGGILRVDRLAQGLIEASKMVELRVPIVARLEGTNVEEGKRMLQESGLNFIIAEDMWDGAKKAVEIANKQS</sequence>
<organism>
    <name type="scientific">Aquifex aeolicus (strain VF5)</name>
    <dbReference type="NCBI Taxonomy" id="224324"/>
    <lineage>
        <taxon>Bacteria</taxon>
        <taxon>Pseudomonadati</taxon>
        <taxon>Aquificota</taxon>
        <taxon>Aquificia</taxon>
        <taxon>Aquificales</taxon>
        <taxon>Aquificaceae</taxon>
        <taxon>Aquifex</taxon>
    </lineage>
</organism>
<gene>
    <name evidence="1" type="primary">sucC</name>
    <name type="ordered locus">aq_1620</name>
</gene>